<reference key="1">
    <citation type="journal article" date="1999" name="Nature">
        <title>Sequence and analysis of chromosome 2 of the plant Arabidopsis thaliana.</title>
        <authorList>
            <person name="Lin X."/>
            <person name="Kaul S."/>
            <person name="Rounsley S.D."/>
            <person name="Shea T.P."/>
            <person name="Benito M.-I."/>
            <person name="Town C.D."/>
            <person name="Fujii C.Y."/>
            <person name="Mason T.M."/>
            <person name="Bowman C.L."/>
            <person name="Barnstead M.E."/>
            <person name="Feldblyum T.V."/>
            <person name="Buell C.R."/>
            <person name="Ketchum K.A."/>
            <person name="Lee J.J."/>
            <person name="Ronning C.M."/>
            <person name="Koo H.L."/>
            <person name="Moffat K.S."/>
            <person name="Cronin L.A."/>
            <person name="Shen M."/>
            <person name="Pai G."/>
            <person name="Van Aken S."/>
            <person name="Umayam L."/>
            <person name="Tallon L.J."/>
            <person name="Gill J.E."/>
            <person name="Adams M.D."/>
            <person name="Carrera A.J."/>
            <person name="Creasy T.H."/>
            <person name="Goodman H.M."/>
            <person name="Somerville C.R."/>
            <person name="Copenhaver G.P."/>
            <person name="Preuss D."/>
            <person name="Nierman W.C."/>
            <person name="White O."/>
            <person name="Eisen J.A."/>
            <person name="Salzberg S.L."/>
            <person name="Fraser C.M."/>
            <person name="Venter J.C."/>
        </authorList>
    </citation>
    <scope>NUCLEOTIDE SEQUENCE [LARGE SCALE GENOMIC DNA]</scope>
    <source>
        <strain>cv. Columbia</strain>
    </source>
</reference>
<reference key="2">
    <citation type="journal article" date="2017" name="Plant J.">
        <title>Araport11: a complete reannotation of the Arabidopsis thaliana reference genome.</title>
        <authorList>
            <person name="Cheng C.Y."/>
            <person name="Krishnakumar V."/>
            <person name="Chan A.P."/>
            <person name="Thibaud-Nissen F."/>
            <person name="Schobel S."/>
            <person name="Town C.D."/>
        </authorList>
    </citation>
    <scope>GENOME REANNOTATION</scope>
    <source>
        <strain>cv. Columbia</strain>
    </source>
</reference>
<reference key="3">
    <citation type="journal article" date="2003" name="Science">
        <title>Empirical analysis of transcriptional activity in the Arabidopsis genome.</title>
        <authorList>
            <person name="Yamada K."/>
            <person name="Lim J."/>
            <person name="Dale J.M."/>
            <person name="Chen H."/>
            <person name="Shinn P."/>
            <person name="Palm C.J."/>
            <person name="Southwick A.M."/>
            <person name="Wu H.C."/>
            <person name="Kim C.J."/>
            <person name="Nguyen M."/>
            <person name="Pham P.K."/>
            <person name="Cheuk R.F."/>
            <person name="Karlin-Newmann G."/>
            <person name="Liu S.X."/>
            <person name="Lam B."/>
            <person name="Sakano H."/>
            <person name="Wu T."/>
            <person name="Yu G."/>
            <person name="Miranda M."/>
            <person name="Quach H.L."/>
            <person name="Tripp M."/>
            <person name="Chang C.H."/>
            <person name="Lee J.M."/>
            <person name="Toriumi M.J."/>
            <person name="Chan M.M."/>
            <person name="Tang C.C."/>
            <person name="Onodera C.S."/>
            <person name="Deng J.M."/>
            <person name="Akiyama K."/>
            <person name="Ansari Y."/>
            <person name="Arakawa T."/>
            <person name="Banh J."/>
            <person name="Banno F."/>
            <person name="Bowser L."/>
            <person name="Brooks S.Y."/>
            <person name="Carninci P."/>
            <person name="Chao Q."/>
            <person name="Choy N."/>
            <person name="Enju A."/>
            <person name="Goldsmith A.D."/>
            <person name="Gurjal M."/>
            <person name="Hansen N.F."/>
            <person name="Hayashizaki Y."/>
            <person name="Johnson-Hopson C."/>
            <person name="Hsuan V.W."/>
            <person name="Iida K."/>
            <person name="Karnes M."/>
            <person name="Khan S."/>
            <person name="Koesema E."/>
            <person name="Ishida J."/>
            <person name="Jiang P.X."/>
            <person name="Jones T."/>
            <person name="Kawai J."/>
            <person name="Kamiya A."/>
            <person name="Meyers C."/>
            <person name="Nakajima M."/>
            <person name="Narusaka M."/>
            <person name="Seki M."/>
            <person name="Sakurai T."/>
            <person name="Satou M."/>
            <person name="Tamse R."/>
            <person name="Vaysberg M."/>
            <person name="Wallender E.K."/>
            <person name="Wong C."/>
            <person name="Yamamura Y."/>
            <person name="Yuan S."/>
            <person name="Shinozaki K."/>
            <person name="Davis R.W."/>
            <person name="Theologis A."/>
            <person name="Ecker J.R."/>
        </authorList>
    </citation>
    <scope>NUCLEOTIDE SEQUENCE [LARGE SCALE MRNA]</scope>
    <source>
        <strain>cv. Columbia</strain>
    </source>
</reference>
<reference key="4">
    <citation type="submission" date="1996-10" db="EMBL/GenBank/DDBJ databases">
        <title>From expressed sequence tags to structure, function, evolution and expression of 28 ER-targeted Arabidopsis peroxidases.</title>
        <authorList>
            <person name="Welinder K.G."/>
            <person name="Jespersen H.M."/>
            <person name="Kjaersgaard I.V.H."/>
            <person name="Justesen A.F."/>
            <person name="Oestergaard L."/>
            <person name="Abelskov A.K."/>
            <person name="Jensen R.B."/>
            <person name="Hansen L.N."/>
            <person name="Rasmussen S.K."/>
        </authorList>
    </citation>
    <scope>NUCLEOTIDE SEQUENCE [MRNA] OF 2-323</scope>
    <source>
        <strain>cv. Columbia</strain>
    </source>
</reference>
<reference key="5">
    <citation type="journal article" date="1998" name="FEBS Lett.">
        <title>Computational analyses and annotations of the Arabidopsis peroxidase gene family.</title>
        <authorList>
            <person name="Oestergaard L."/>
            <person name="Pedersen A.G."/>
            <person name="Jespersen H.M."/>
            <person name="Brunak S."/>
            <person name="Welinder K.G."/>
        </authorList>
    </citation>
    <scope>CHARACTERIZATION</scope>
    <source>
        <strain>cv. Columbia</strain>
    </source>
</reference>
<reference key="6">
    <citation type="journal article" date="2001" name="Plant Physiol. Biochem.">
        <title>Toward elucidating the global gene expression patterns of developing Arabidopsis: parallel analysis of 8300 genes by a high-density oligonucleotide probe array.</title>
        <authorList>
            <person name="Zhu T."/>
            <person name="Budworth P."/>
            <person name="Han B."/>
            <person name="Brown D."/>
            <person name="Chang H.-S."/>
            <person name="Zou G."/>
            <person name="Wang X."/>
        </authorList>
    </citation>
    <scope>TISSUE SPECIFICITY</scope>
    <source>
        <strain>cv. Columbia</strain>
    </source>
</reference>
<reference key="7">
    <citation type="journal article" date="2002" name="Gene">
        <title>Analysis and expression of the class III peroxidase large gene family in Arabidopsis thaliana.</title>
        <authorList>
            <person name="Tognolli M."/>
            <person name="Penel C."/>
            <person name="Greppin H."/>
            <person name="Simon P."/>
        </authorList>
    </citation>
    <scope>GENE FAMILY ORGANIZATION</scope>
    <scope>NOMENCLATURE</scope>
    <source>
        <strain>cv. Columbia</strain>
    </source>
</reference>
<sequence>MKNQSSFSIVALLLIFFSSSVFAQLQTNFYRKSCPNVETIVRNAVRQKFQQTFVTAPATLRLFFHDCFVRGCDASILLASPSEKDHPDDKSLAGDGFDTVAKAKQALDRDPNCRNKVSCADILALATRDVVVLTGGPNYPVELGRRDGRLSTVASVQHSLPQPSFKLDQLNTMFARHGLSQTDMIALSGAHTIGFAHCGKFSKRIYNFSPKRPIDPTLNIRYALQLRQMCPIRVDLRIAINMDPTSPNTFDNAYFKNLQKGMGLFTSDQVLFSDERSRSTVNSFASSEATFRQAFISAITKLGRVGVKTGNAGEIRRDCSRVN</sequence>
<proteinExistence type="evidence at protein level"/>
<accession>Q96518</accession>
<organism>
    <name type="scientific">Arabidopsis thaliana</name>
    <name type="common">Mouse-ear cress</name>
    <dbReference type="NCBI Taxonomy" id="3702"/>
    <lineage>
        <taxon>Eukaryota</taxon>
        <taxon>Viridiplantae</taxon>
        <taxon>Streptophyta</taxon>
        <taxon>Embryophyta</taxon>
        <taxon>Tracheophyta</taxon>
        <taxon>Spermatophyta</taxon>
        <taxon>Magnoliopsida</taxon>
        <taxon>eudicotyledons</taxon>
        <taxon>Gunneridae</taxon>
        <taxon>Pentapetalae</taxon>
        <taxon>rosids</taxon>
        <taxon>malvids</taxon>
        <taxon>Brassicales</taxon>
        <taxon>Brassicaceae</taxon>
        <taxon>Camelineae</taxon>
        <taxon>Arabidopsis</taxon>
    </lineage>
</organism>
<evidence type="ECO:0000255" key="1"/>
<evidence type="ECO:0000255" key="2">
    <source>
        <dbReference type="PROSITE-ProRule" id="PRU00297"/>
    </source>
</evidence>
<evidence type="ECO:0000255" key="3">
    <source>
        <dbReference type="PROSITE-ProRule" id="PRU10012"/>
    </source>
</evidence>
<evidence type="ECO:0000269" key="4">
    <source ref="6"/>
</evidence>
<comment type="function">
    <text>Removal of H(2)O(2), oxidation of toxic reductants, biosynthesis and degradation of lignin, suberization, auxin catabolism, response to environmental stresses such as wounding, pathogen attack and oxidative stress. These functions might be dependent on each isozyme/isoform in each plant tissue.</text>
</comment>
<comment type="catalytic activity">
    <reaction>
        <text>2 a phenolic donor + H2O2 = 2 a phenolic radical donor + 2 H2O</text>
        <dbReference type="Rhea" id="RHEA:56136"/>
        <dbReference type="ChEBI" id="CHEBI:15377"/>
        <dbReference type="ChEBI" id="CHEBI:16240"/>
        <dbReference type="ChEBI" id="CHEBI:139520"/>
        <dbReference type="ChEBI" id="CHEBI:139521"/>
        <dbReference type="EC" id="1.11.1.7"/>
    </reaction>
</comment>
<comment type="cofactor">
    <cofactor evidence="2">
        <name>heme b</name>
        <dbReference type="ChEBI" id="CHEBI:60344"/>
    </cofactor>
    <text evidence="2">Binds 1 heme b (iron(II)-protoporphyrin IX) group per subunit.</text>
</comment>
<comment type="cofactor">
    <cofactor evidence="2">
        <name>Ca(2+)</name>
        <dbReference type="ChEBI" id="CHEBI:29108"/>
    </cofactor>
    <text evidence="2">Binds 2 calcium ions per subunit.</text>
</comment>
<comment type="subcellular location">
    <subcellularLocation>
        <location evidence="2">Secreted</location>
    </subcellularLocation>
</comment>
<comment type="tissue specificity">
    <text evidence="4">Expressed in the whole plant, but preferentially in roots and leaves.</text>
</comment>
<comment type="miscellaneous">
    <text>There are 73 peroxidase genes in A.thaliana.</text>
</comment>
<comment type="similarity">
    <text evidence="2">Belongs to the peroxidase family. Classical plant (class III) peroxidase subfamily.</text>
</comment>
<dbReference type="EC" id="1.11.1.7"/>
<dbReference type="EMBL" id="AC003673">
    <property type="protein sequence ID" value="AAC09031.1"/>
    <property type="molecule type" value="Genomic_DNA"/>
</dbReference>
<dbReference type="EMBL" id="CP002685">
    <property type="protein sequence ID" value="AEC06835.1"/>
    <property type="molecule type" value="Genomic_DNA"/>
</dbReference>
<dbReference type="EMBL" id="BT003082">
    <property type="protein sequence ID" value="AAO23647.1"/>
    <property type="molecule type" value="mRNA"/>
</dbReference>
<dbReference type="EMBL" id="Y08781">
    <property type="protein sequence ID" value="CAA70034.1"/>
    <property type="molecule type" value="mRNA"/>
</dbReference>
<dbReference type="PIR" id="T01626">
    <property type="entry name" value="T01626"/>
</dbReference>
<dbReference type="RefSeq" id="NP_179488.1">
    <property type="nucleotide sequence ID" value="NM_127455.4"/>
</dbReference>
<dbReference type="SMR" id="Q96518"/>
<dbReference type="FunCoup" id="Q96518">
    <property type="interactions" value="263"/>
</dbReference>
<dbReference type="STRING" id="3702.Q96518"/>
<dbReference type="PeroxiBase" id="97">
    <property type="entry name" value="AtPrx16"/>
</dbReference>
<dbReference type="PaxDb" id="3702-AT2G18980.1"/>
<dbReference type="ProteomicsDB" id="236414"/>
<dbReference type="EnsemblPlants" id="AT2G18980.1">
    <property type="protein sequence ID" value="AT2G18980.1"/>
    <property type="gene ID" value="AT2G18980"/>
</dbReference>
<dbReference type="GeneID" id="816415"/>
<dbReference type="Gramene" id="AT2G18980.1">
    <property type="protein sequence ID" value="AT2G18980.1"/>
    <property type="gene ID" value="AT2G18980"/>
</dbReference>
<dbReference type="KEGG" id="ath:AT2G18980"/>
<dbReference type="Araport" id="AT2G18980"/>
<dbReference type="TAIR" id="AT2G18980"/>
<dbReference type="eggNOG" id="ENOG502QUMM">
    <property type="taxonomic scope" value="Eukaryota"/>
</dbReference>
<dbReference type="HOGENOM" id="CLU_010543_0_3_1"/>
<dbReference type="InParanoid" id="Q96518"/>
<dbReference type="OMA" id="NFYSATC"/>
<dbReference type="OrthoDB" id="2113341at2759"/>
<dbReference type="PhylomeDB" id="Q96518"/>
<dbReference type="BioCyc" id="ARA:AT2G18980-MONOMER"/>
<dbReference type="CD-CODE" id="4299E36E">
    <property type="entry name" value="Nucleolus"/>
</dbReference>
<dbReference type="PRO" id="PR:Q96518"/>
<dbReference type="Proteomes" id="UP000006548">
    <property type="component" value="Chromosome 2"/>
</dbReference>
<dbReference type="ExpressionAtlas" id="Q96518">
    <property type="expression patterns" value="baseline and differential"/>
</dbReference>
<dbReference type="GO" id="GO:0005576">
    <property type="term" value="C:extracellular region"/>
    <property type="evidence" value="ECO:0007669"/>
    <property type="project" value="UniProtKB-SubCell"/>
</dbReference>
<dbReference type="GO" id="GO:0020037">
    <property type="term" value="F:heme binding"/>
    <property type="evidence" value="ECO:0007669"/>
    <property type="project" value="InterPro"/>
</dbReference>
<dbReference type="GO" id="GO:0140825">
    <property type="term" value="F:lactoperoxidase activity"/>
    <property type="evidence" value="ECO:0007669"/>
    <property type="project" value="UniProtKB-EC"/>
</dbReference>
<dbReference type="GO" id="GO:0046872">
    <property type="term" value="F:metal ion binding"/>
    <property type="evidence" value="ECO:0007669"/>
    <property type="project" value="UniProtKB-KW"/>
</dbReference>
<dbReference type="GO" id="GO:0042744">
    <property type="term" value="P:hydrogen peroxide catabolic process"/>
    <property type="evidence" value="ECO:0007669"/>
    <property type="project" value="UniProtKB-KW"/>
</dbReference>
<dbReference type="GO" id="GO:0006979">
    <property type="term" value="P:response to oxidative stress"/>
    <property type="evidence" value="ECO:0007669"/>
    <property type="project" value="InterPro"/>
</dbReference>
<dbReference type="CDD" id="cd00693">
    <property type="entry name" value="secretory_peroxidase"/>
    <property type="match status" value="1"/>
</dbReference>
<dbReference type="FunFam" id="1.10.420.10:FF:000001">
    <property type="entry name" value="Peroxidase"/>
    <property type="match status" value="1"/>
</dbReference>
<dbReference type="FunFam" id="1.10.520.10:FF:000008">
    <property type="entry name" value="Peroxidase"/>
    <property type="match status" value="1"/>
</dbReference>
<dbReference type="Gene3D" id="1.10.520.10">
    <property type="match status" value="1"/>
</dbReference>
<dbReference type="Gene3D" id="1.10.420.10">
    <property type="entry name" value="Peroxidase, domain 2"/>
    <property type="match status" value="1"/>
</dbReference>
<dbReference type="InterPro" id="IPR002016">
    <property type="entry name" value="Haem_peroxidase"/>
</dbReference>
<dbReference type="InterPro" id="IPR010255">
    <property type="entry name" value="Haem_peroxidase_sf"/>
</dbReference>
<dbReference type="InterPro" id="IPR000823">
    <property type="entry name" value="Peroxidase_pln"/>
</dbReference>
<dbReference type="InterPro" id="IPR019794">
    <property type="entry name" value="Peroxidases_AS"/>
</dbReference>
<dbReference type="InterPro" id="IPR019793">
    <property type="entry name" value="Peroxidases_heam-ligand_BS"/>
</dbReference>
<dbReference type="InterPro" id="IPR033905">
    <property type="entry name" value="Secretory_peroxidase"/>
</dbReference>
<dbReference type="PANTHER" id="PTHR31517">
    <property type="match status" value="1"/>
</dbReference>
<dbReference type="PANTHER" id="PTHR31517:SF48">
    <property type="entry name" value="PEROXIDASE 16-RELATED"/>
    <property type="match status" value="1"/>
</dbReference>
<dbReference type="Pfam" id="PF00141">
    <property type="entry name" value="peroxidase"/>
    <property type="match status" value="1"/>
</dbReference>
<dbReference type="PRINTS" id="PR00458">
    <property type="entry name" value="PEROXIDASE"/>
</dbReference>
<dbReference type="PRINTS" id="PR00461">
    <property type="entry name" value="PLPEROXIDASE"/>
</dbReference>
<dbReference type="SUPFAM" id="SSF48113">
    <property type="entry name" value="Heme-dependent peroxidases"/>
    <property type="match status" value="1"/>
</dbReference>
<dbReference type="PROSITE" id="PS00435">
    <property type="entry name" value="PEROXIDASE_1"/>
    <property type="match status" value="1"/>
</dbReference>
<dbReference type="PROSITE" id="PS00436">
    <property type="entry name" value="PEROXIDASE_2"/>
    <property type="match status" value="1"/>
</dbReference>
<dbReference type="PROSITE" id="PS50873">
    <property type="entry name" value="PEROXIDASE_4"/>
    <property type="match status" value="1"/>
</dbReference>
<keyword id="KW-0106">Calcium</keyword>
<keyword id="KW-1015">Disulfide bond</keyword>
<keyword id="KW-0349">Heme</keyword>
<keyword id="KW-0376">Hydrogen peroxide</keyword>
<keyword id="KW-0408">Iron</keyword>
<keyword id="KW-0479">Metal-binding</keyword>
<keyword id="KW-0560">Oxidoreductase</keyword>
<keyword id="KW-0575">Peroxidase</keyword>
<keyword id="KW-1185">Reference proteome</keyword>
<keyword id="KW-0964">Secreted</keyword>
<keyword id="KW-0732">Signal</keyword>
<feature type="signal peptide" evidence="1">
    <location>
        <begin position="1"/>
        <end position="23"/>
    </location>
</feature>
<feature type="chain" id="PRO_0000023682" description="Peroxidase 16">
    <location>
        <begin position="24"/>
        <end position="323"/>
    </location>
</feature>
<feature type="active site" description="Proton acceptor" evidence="2 3">
    <location>
        <position position="65"/>
    </location>
</feature>
<feature type="binding site" evidence="2">
    <location>
        <position position="66"/>
    </location>
    <ligand>
        <name>Ca(2+)</name>
        <dbReference type="ChEBI" id="CHEBI:29108"/>
        <label>1</label>
    </ligand>
</feature>
<feature type="binding site" evidence="2">
    <location>
        <position position="69"/>
    </location>
    <ligand>
        <name>Ca(2+)</name>
        <dbReference type="ChEBI" id="CHEBI:29108"/>
        <label>1</label>
    </ligand>
</feature>
<feature type="binding site" evidence="2">
    <location>
        <position position="71"/>
    </location>
    <ligand>
        <name>Ca(2+)</name>
        <dbReference type="ChEBI" id="CHEBI:29108"/>
        <label>1</label>
    </ligand>
</feature>
<feature type="binding site" evidence="2">
    <location>
        <position position="73"/>
    </location>
    <ligand>
        <name>Ca(2+)</name>
        <dbReference type="ChEBI" id="CHEBI:29108"/>
        <label>1</label>
    </ligand>
</feature>
<feature type="binding site" evidence="2">
    <location>
        <position position="75"/>
    </location>
    <ligand>
        <name>Ca(2+)</name>
        <dbReference type="ChEBI" id="CHEBI:29108"/>
        <label>1</label>
    </ligand>
</feature>
<feature type="binding site" evidence="2">
    <location>
        <position position="161"/>
    </location>
    <ligand>
        <name>substrate</name>
    </ligand>
</feature>
<feature type="binding site" description="axial binding residue" evidence="2">
    <location>
        <position position="191"/>
    </location>
    <ligand>
        <name>heme b</name>
        <dbReference type="ChEBI" id="CHEBI:60344"/>
    </ligand>
    <ligandPart>
        <name>Fe</name>
        <dbReference type="ChEBI" id="CHEBI:18248"/>
    </ligandPart>
</feature>
<feature type="binding site" evidence="2">
    <location>
        <position position="192"/>
    </location>
    <ligand>
        <name>Ca(2+)</name>
        <dbReference type="ChEBI" id="CHEBI:29108"/>
        <label>2</label>
    </ligand>
</feature>
<feature type="binding site" evidence="2">
    <location>
        <position position="243"/>
    </location>
    <ligand>
        <name>Ca(2+)</name>
        <dbReference type="ChEBI" id="CHEBI:29108"/>
        <label>2</label>
    </ligand>
</feature>
<feature type="binding site" evidence="2">
    <location>
        <position position="246"/>
    </location>
    <ligand>
        <name>Ca(2+)</name>
        <dbReference type="ChEBI" id="CHEBI:29108"/>
        <label>2</label>
    </ligand>
</feature>
<feature type="binding site" evidence="2">
    <location>
        <position position="251"/>
    </location>
    <ligand>
        <name>Ca(2+)</name>
        <dbReference type="ChEBI" id="CHEBI:29108"/>
        <label>2</label>
    </ligand>
</feature>
<feature type="site" description="Transition state stabilizer" evidence="2">
    <location>
        <position position="61"/>
    </location>
</feature>
<feature type="disulfide bond" evidence="2">
    <location>
        <begin position="34"/>
        <end position="113"/>
    </location>
</feature>
<feature type="disulfide bond" evidence="2">
    <location>
        <begin position="67"/>
        <end position="72"/>
    </location>
</feature>
<feature type="disulfide bond" evidence="2">
    <location>
        <begin position="119"/>
        <end position="319"/>
    </location>
</feature>
<feature type="disulfide bond" evidence="2">
    <location>
        <begin position="198"/>
        <end position="230"/>
    </location>
</feature>
<gene>
    <name type="primary">PER16</name>
    <name type="synonym">P16</name>
    <name type="ordered locus">At2g18980</name>
    <name type="ORF">F19F24.18</name>
</gene>
<name>PER16_ARATH</name>
<protein>
    <recommendedName>
        <fullName>Peroxidase 16</fullName>
        <shortName>Atperox P16</shortName>
        <ecNumber>1.11.1.7</ecNumber>
    </recommendedName>
    <alternativeName>
        <fullName>ATP22a</fullName>
    </alternativeName>
</protein>